<name>HSSR_STAAW</name>
<reference key="1">
    <citation type="journal article" date="2002" name="Lancet">
        <title>Genome and virulence determinants of high virulence community-acquired MRSA.</title>
        <authorList>
            <person name="Baba T."/>
            <person name="Takeuchi F."/>
            <person name="Kuroda M."/>
            <person name="Yuzawa H."/>
            <person name="Aoki K."/>
            <person name="Oguchi A."/>
            <person name="Nagai Y."/>
            <person name="Iwama N."/>
            <person name="Asano K."/>
            <person name="Naimi T."/>
            <person name="Kuroda H."/>
            <person name="Cui L."/>
            <person name="Yamamoto K."/>
            <person name="Hiramatsu K."/>
        </authorList>
    </citation>
    <scope>NUCLEOTIDE SEQUENCE [LARGE SCALE GENOMIC DNA]</scope>
    <source>
        <strain>MW2</strain>
    </source>
</reference>
<sequence>MVQCLVVDDDPRILNYIASHLQTEHIDAYTQPSGEAALKLLEKQRVDIAVVDIMMDGMDGFQLCNTLKNDYDIPVIMLTARDALSDKERAFISGTDDYVTKPFEVKELIFRIRAVLRRYNINSNSEMTIGNLTLNQSYLELQVSNKTMTLPNKEFQLLFMLAARPKQIFTREQIIEKIWGYDYEGDERTVDVHIKRLRQRLKKLNATLTIETVRGQGYKVENHV</sequence>
<accession>Q7A039</accession>
<comment type="function">
    <text evidence="1">Member of the two-component regulatory system HssS/HssR involved in intracellular heme homeostasis and tempering of staphylococcal virulence. Phosphorylated HssR binds to a direct repeat sequence within hrtAB promoter and activates the expression of hrtAB, an efflux pump, in response to extracellular heme, hemin, hemoglobin or blood (By similarity).</text>
</comment>
<comment type="subcellular location">
    <subcellularLocation>
        <location evidence="4">Cytoplasm</location>
    </subcellularLocation>
</comment>
<comment type="PTM">
    <text evidence="1">Phosphorylated by HssS.</text>
</comment>
<protein>
    <recommendedName>
        <fullName>Heme response regulator HssR</fullName>
    </recommendedName>
</protein>
<organism>
    <name type="scientific">Staphylococcus aureus (strain MW2)</name>
    <dbReference type="NCBI Taxonomy" id="196620"/>
    <lineage>
        <taxon>Bacteria</taxon>
        <taxon>Bacillati</taxon>
        <taxon>Bacillota</taxon>
        <taxon>Bacilli</taxon>
        <taxon>Bacillales</taxon>
        <taxon>Staphylococcaceae</taxon>
        <taxon>Staphylococcus</taxon>
    </lineage>
</organism>
<gene>
    <name type="primary">hssR</name>
    <name type="ordered locus">MW2282</name>
</gene>
<proteinExistence type="inferred from homology"/>
<keyword id="KW-0010">Activator</keyword>
<keyword id="KW-0963">Cytoplasm</keyword>
<keyword id="KW-0238">DNA-binding</keyword>
<keyword id="KW-0597">Phosphoprotein</keyword>
<keyword id="KW-0804">Transcription</keyword>
<keyword id="KW-0805">Transcription regulation</keyword>
<keyword id="KW-0902">Two-component regulatory system</keyword>
<keyword id="KW-0843">Virulence</keyword>
<evidence type="ECO:0000250" key="1"/>
<evidence type="ECO:0000255" key="2">
    <source>
        <dbReference type="PROSITE-ProRule" id="PRU00169"/>
    </source>
</evidence>
<evidence type="ECO:0000255" key="3">
    <source>
        <dbReference type="PROSITE-ProRule" id="PRU01091"/>
    </source>
</evidence>
<evidence type="ECO:0000305" key="4"/>
<dbReference type="EMBL" id="BA000033">
    <property type="protein sequence ID" value="BAB96147.1"/>
    <property type="molecule type" value="Genomic_DNA"/>
</dbReference>
<dbReference type="RefSeq" id="WP_000249497.1">
    <property type="nucleotide sequence ID" value="NC_003923.1"/>
</dbReference>
<dbReference type="SMR" id="Q7A039"/>
<dbReference type="KEGG" id="sam:MW2282"/>
<dbReference type="HOGENOM" id="CLU_000445_30_3_9"/>
<dbReference type="GO" id="GO:0005829">
    <property type="term" value="C:cytosol"/>
    <property type="evidence" value="ECO:0007669"/>
    <property type="project" value="TreeGrafter"/>
</dbReference>
<dbReference type="GO" id="GO:0032993">
    <property type="term" value="C:protein-DNA complex"/>
    <property type="evidence" value="ECO:0007669"/>
    <property type="project" value="TreeGrafter"/>
</dbReference>
<dbReference type="GO" id="GO:0000156">
    <property type="term" value="F:phosphorelay response regulator activity"/>
    <property type="evidence" value="ECO:0007669"/>
    <property type="project" value="TreeGrafter"/>
</dbReference>
<dbReference type="GO" id="GO:0000976">
    <property type="term" value="F:transcription cis-regulatory region binding"/>
    <property type="evidence" value="ECO:0007669"/>
    <property type="project" value="TreeGrafter"/>
</dbReference>
<dbReference type="GO" id="GO:0006355">
    <property type="term" value="P:regulation of DNA-templated transcription"/>
    <property type="evidence" value="ECO:0007669"/>
    <property type="project" value="InterPro"/>
</dbReference>
<dbReference type="CDD" id="cd17574">
    <property type="entry name" value="REC_OmpR"/>
    <property type="match status" value="1"/>
</dbReference>
<dbReference type="CDD" id="cd00383">
    <property type="entry name" value="trans_reg_C"/>
    <property type="match status" value="1"/>
</dbReference>
<dbReference type="FunFam" id="1.10.10.10:FF:000018">
    <property type="entry name" value="DNA-binding response regulator ResD"/>
    <property type="match status" value="1"/>
</dbReference>
<dbReference type="Gene3D" id="3.40.50.2300">
    <property type="match status" value="1"/>
</dbReference>
<dbReference type="Gene3D" id="6.10.250.690">
    <property type="match status" value="1"/>
</dbReference>
<dbReference type="Gene3D" id="1.10.10.10">
    <property type="entry name" value="Winged helix-like DNA-binding domain superfamily/Winged helix DNA-binding domain"/>
    <property type="match status" value="1"/>
</dbReference>
<dbReference type="InterPro" id="IPR011006">
    <property type="entry name" value="CheY-like_superfamily"/>
</dbReference>
<dbReference type="InterPro" id="IPR001867">
    <property type="entry name" value="OmpR/PhoB-type_DNA-bd"/>
</dbReference>
<dbReference type="InterPro" id="IPR001789">
    <property type="entry name" value="Sig_transdc_resp-reg_receiver"/>
</dbReference>
<dbReference type="InterPro" id="IPR039420">
    <property type="entry name" value="WalR-like"/>
</dbReference>
<dbReference type="InterPro" id="IPR036388">
    <property type="entry name" value="WH-like_DNA-bd_sf"/>
</dbReference>
<dbReference type="PANTHER" id="PTHR48111:SF49">
    <property type="entry name" value="HEME RESPONSE REGULATOR HSSR"/>
    <property type="match status" value="1"/>
</dbReference>
<dbReference type="PANTHER" id="PTHR48111">
    <property type="entry name" value="REGULATOR OF RPOS"/>
    <property type="match status" value="1"/>
</dbReference>
<dbReference type="Pfam" id="PF00072">
    <property type="entry name" value="Response_reg"/>
    <property type="match status" value="1"/>
</dbReference>
<dbReference type="Pfam" id="PF00486">
    <property type="entry name" value="Trans_reg_C"/>
    <property type="match status" value="1"/>
</dbReference>
<dbReference type="SMART" id="SM00448">
    <property type="entry name" value="REC"/>
    <property type="match status" value="1"/>
</dbReference>
<dbReference type="SMART" id="SM00862">
    <property type="entry name" value="Trans_reg_C"/>
    <property type="match status" value="1"/>
</dbReference>
<dbReference type="SUPFAM" id="SSF52172">
    <property type="entry name" value="CheY-like"/>
    <property type="match status" value="1"/>
</dbReference>
<dbReference type="PROSITE" id="PS51755">
    <property type="entry name" value="OMPR_PHOB"/>
    <property type="match status" value="1"/>
</dbReference>
<dbReference type="PROSITE" id="PS50110">
    <property type="entry name" value="RESPONSE_REGULATORY"/>
    <property type="match status" value="1"/>
</dbReference>
<feature type="chain" id="PRO_0000331327" description="Heme response regulator HssR">
    <location>
        <begin position="1"/>
        <end position="224"/>
    </location>
</feature>
<feature type="domain" description="Response regulatory" evidence="2">
    <location>
        <begin position="3"/>
        <end position="116"/>
    </location>
</feature>
<feature type="DNA-binding region" description="OmpR/PhoB-type" evidence="3">
    <location>
        <begin position="124"/>
        <end position="222"/>
    </location>
</feature>
<feature type="modified residue" description="4-aspartylphosphate" evidence="2">
    <location>
        <position position="52"/>
    </location>
</feature>